<sequence>MTAGRGDEDSLAAGGPARHIPVLRDEILELAAPQADGLYLDATFGAGGYSRGLLATQGARVLAIDRDPGAIAAGAGLIAESNGRLTLVEARFSDLAAVAERLGLGAFDAALFDIGVSSMQLDEAARGFSFRFDGPLDMRMQQSGPSAADIVNDADEEALADILYYFGEERASRRIAKAIVMDRAKAPFRSTAALAAMIARVCPGKPGDIHPATRSFQALRIAVNDELGELVAGLAGAEARLKPGGRLAVVTFHSLEDRIVKLFFAGRSGRGEAPSRRLPGEPIPPPPTFAVSGRQPVTPSAAEIAANPRARSAKLRHGVRTSAPARAPGRDLMALAALPQRAAKGR</sequence>
<dbReference type="EC" id="2.1.1.199" evidence="1"/>
<dbReference type="EMBL" id="CP001280">
    <property type="protein sequence ID" value="ACK52366.1"/>
    <property type="molecule type" value="Genomic_DNA"/>
</dbReference>
<dbReference type="RefSeq" id="WP_012592435.1">
    <property type="nucleotide sequence ID" value="NC_011666.1"/>
</dbReference>
<dbReference type="SMR" id="B8ETL4"/>
<dbReference type="STRING" id="395965.Msil_3477"/>
<dbReference type="KEGG" id="msl:Msil_3477"/>
<dbReference type="eggNOG" id="COG0275">
    <property type="taxonomic scope" value="Bacteria"/>
</dbReference>
<dbReference type="HOGENOM" id="CLU_038422_1_1_5"/>
<dbReference type="OrthoDB" id="9806637at2"/>
<dbReference type="Proteomes" id="UP000002257">
    <property type="component" value="Chromosome"/>
</dbReference>
<dbReference type="GO" id="GO:0005737">
    <property type="term" value="C:cytoplasm"/>
    <property type="evidence" value="ECO:0007669"/>
    <property type="project" value="UniProtKB-SubCell"/>
</dbReference>
<dbReference type="GO" id="GO:0071424">
    <property type="term" value="F:rRNA (cytosine-N4-)-methyltransferase activity"/>
    <property type="evidence" value="ECO:0007669"/>
    <property type="project" value="UniProtKB-UniRule"/>
</dbReference>
<dbReference type="GO" id="GO:0070475">
    <property type="term" value="P:rRNA base methylation"/>
    <property type="evidence" value="ECO:0007669"/>
    <property type="project" value="UniProtKB-UniRule"/>
</dbReference>
<dbReference type="Gene3D" id="1.10.150.170">
    <property type="entry name" value="Putative methyltransferase TM0872, insert domain"/>
    <property type="match status" value="1"/>
</dbReference>
<dbReference type="Gene3D" id="3.40.50.150">
    <property type="entry name" value="Vaccinia Virus protein VP39"/>
    <property type="match status" value="1"/>
</dbReference>
<dbReference type="HAMAP" id="MF_01007">
    <property type="entry name" value="16SrRNA_methyltr_H"/>
    <property type="match status" value="1"/>
</dbReference>
<dbReference type="InterPro" id="IPR002903">
    <property type="entry name" value="RsmH"/>
</dbReference>
<dbReference type="InterPro" id="IPR023397">
    <property type="entry name" value="SAM-dep_MeTrfase_MraW_recog"/>
</dbReference>
<dbReference type="InterPro" id="IPR029063">
    <property type="entry name" value="SAM-dependent_MTases_sf"/>
</dbReference>
<dbReference type="NCBIfam" id="TIGR00006">
    <property type="entry name" value="16S rRNA (cytosine(1402)-N(4))-methyltransferase RsmH"/>
    <property type="match status" value="1"/>
</dbReference>
<dbReference type="PANTHER" id="PTHR11265:SF0">
    <property type="entry name" value="12S RRNA N4-METHYLCYTIDINE METHYLTRANSFERASE"/>
    <property type="match status" value="1"/>
</dbReference>
<dbReference type="PANTHER" id="PTHR11265">
    <property type="entry name" value="S-ADENOSYL-METHYLTRANSFERASE MRAW"/>
    <property type="match status" value="1"/>
</dbReference>
<dbReference type="Pfam" id="PF01795">
    <property type="entry name" value="Methyltransf_5"/>
    <property type="match status" value="1"/>
</dbReference>
<dbReference type="PIRSF" id="PIRSF004486">
    <property type="entry name" value="MraW"/>
    <property type="match status" value="1"/>
</dbReference>
<dbReference type="SUPFAM" id="SSF81799">
    <property type="entry name" value="Putative methyltransferase TM0872, insert domain"/>
    <property type="match status" value="1"/>
</dbReference>
<dbReference type="SUPFAM" id="SSF53335">
    <property type="entry name" value="S-adenosyl-L-methionine-dependent methyltransferases"/>
    <property type="match status" value="1"/>
</dbReference>
<name>RSMH_METSB</name>
<evidence type="ECO:0000255" key="1">
    <source>
        <dbReference type="HAMAP-Rule" id="MF_01007"/>
    </source>
</evidence>
<evidence type="ECO:0000256" key="2">
    <source>
        <dbReference type="SAM" id="MobiDB-lite"/>
    </source>
</evidence>
<protein>
    <recommendedName>
        <fullName evidence="1">Ribosomal RNA small subunit methyltransferase H</fullName>
        <ecNumber evidence="1">2.1.1.199</ecNumber>
    </recommendedName>
    <alternativeName>
        <fullName evidence="1">16S rRNA m(4)C1402 methyltransferase</fullName>
    </alternativeName>
    <alternativeName>
        <fullName evidence="1">rRNA (cytosine-N(4)-)-methyltransferase RsmH</fullName>
    </alternativeName>
</protein>
<comment type="function">
    <text evidence="1">Specifically methylates the N4 position of cytidine in position 1402 (C1402) of 16S rRNA.</text>
</comment>
<comment type="catalytic activity">
    <reaction evidence="1">
        <text>cytidine(1402) in 16S rRNA + S-adenosyl-L-methionine = N(4)-methylcytidine(1402) in 16S rRNA + S-adenosyl-L-homocysteine + H(+)</text>
        <dbReference type="Rhea" id="RHEA:42928"/>
        <dbReference type="Rhea" id="RHEA-COMP:10286"/>
        <dbReference type="Rhea" id="RHEA-COMP:10287"/>
        <dbReference type="ChEBI" id="CHEBI:15378"/>
        <dbReference type="ChEBI" id="CHEBI:57856"/>
        <dbReference type="ChEBI" id="CHEBI:59789"/>
        <dbReference type="ChEBI" id="CHEBI:74506"/>
        <dbReference type="ChEBI" id="CHEBI:82748"/>
        <dbReference type="EC" id="2.1.1.199"/>
    </reaction>
</comment>
<comment type="subcellular location">
    <subcellularLocation>
        <location evidence="1">Cytoplasm</location>
    </subcellularLocation>
</comment>
<comment type="similarity">
    <text evidence="1">Belongs to the methyltransferase superfamily. RsmH family.</text>
</comment>
<proteinExistence type="inferred from homology"/>
<gene>
    <name evidence="1" type="primary">rsmH</name>
    <name type="synonym">mraW</name>
    <name type="ordered locus">Msil_3477</name>
</gene>
<keyword id="KW-0963">Cytoplasm</keyword>
<keyword id="KW-0489">Methyltransferase</keyword>
<keyword id="KW-1185">Reference proteome</keyword>
<keyword id="KW-0698">rRNA processing</keyword>
<keyword id="KW-0949">S-adenosyl-L-methionine</keyword>
<keyword id="KW-0808">Transferase</keyword>
<feature type="chain" id="PRO_0000386980" description="Ribosomal RNA small subunit methyltransferase H">
    <location>
        <begin position="1"/>
        <end position="346"/>
    </location>
</feature>
<feature type="region of interest" description="Disordered" evidence="2">
    <location>
        <begin position="270"/>
        <end position="346"/>
    </location>
</feature>
<feature type="compositionally biased region" description="Basic and acidic residues" evidence="2">
    <location>
        <begin position="270"/>
        <end position="279"/>
    </location>
</feature>
<feature type="binding site" evidence="1">
    <location>
        <begin position="47"/>
        <end position="49"/>
    </location>
    <ligand>
        <name>S-adenosyl-L-methionine</name>
        <dbReference type="ChEBI" id="CHEBI:59789"/>
    </ligand>
</feature>
<feature type="binding site" evidence="1">
    <location>
        <position position="65"/>
    </location>
    <ligand>
        <name>S-adenosyl-L-methionine</name>
        <dbReference type="ChEBI" id="CHEBI:59789"/>
    </ligand>
</feature>
<feature type="binding site" evidence="1">
    <location>
        <position position="92"/>
    </location>
    <ligand>
        <name>S-adenosyl-L-methionine</name>
        <dbReference type="ChEBI" id="CHEBI:59789"/>
    </ligand>
</feature>
<feature type="binding site" evidence="1">
    <location>
        <position position="113"/>
    </location>
    <ligand>
        <name>S-adenosyl-L-methionine</name>
        <dbReference type="ChEBI" id="CHEBI:59789"/>
    </ligand>
</feature>
<feature type="binding site" evidence="1">
    <location>
        <position position="120"/>
    </location>
    <ligand>
        <name>S-adenosyl-L-methionine</name>
        <dbReference type="ChEBI" id="CHEBI:59789"/>
    </ligand>
</feature>
<reference key="1">
    <citation type="journal article" date="2010" name="J. Bacteriol.">
        <title>Complete genome sequence of the aerobic facultative methanotroph Methylocella silvestris BL2.</title>
        <authorList>
            <person name="Chen Y."/>
            <person name="Crombie A."/>
            <person name="Rahman M.T."/>
            <person name="Dedysh S.N."/>
            <person name="Liesack W."/>
            <person name="Stott M.B."/>
            <person name="Alam M."/>
            <person name="Theisen A.R."/>
            <person name="Murrell J.C."/>
            <person name="Dunfield P.F."/>
        </authorList>
    </citation>
    <scope>NUCLEOTIDE SEQUENCE [LARGE SCALE GENOMIC DNA]</scope>
    <source>
        <strain>DSM 15510 / CIP 108128 / LMG 27833 / NCIMB 13906 / BL2</strain>
    </source>
</reference>
<organism>
    <name type="scientific">Methylocella silvestris (strain DSM 15510 / CIP 108128 / LMG 27833 / NCIMB 13906 / BL2)</name>
    <dbReference type="NCBI Taxonomy" id="395965"/>
    <lineage>
        <taxon>Bacteria</taxon>
        <taxon>Pseudomonadati</taxon>
        <taxon>Pseudomonadota</taxon>
        <taxon>Alphaproteobacteria</taxon>
        <taxon>Hyphomicrobiales</taxon>
        <taxon>Beijerinckiaceae</taxon>
        <taxon>Methylocella</taxon>
    </lineage>
</organism>
<accession>B8ETL4</accession>